<accession>Q9MZL7</accession>
<accession>Q9MZL6</accession>
<sequence>MVQKTSMSRGPYPSSQEIPMEVFDPSPQGKYSKRKGRFKRSDGSTSSDTTSNSFVRQGSAESYTSRPSDSDVSLEEDREALRKEAERQALAQLEKAKTKPVAFAVRTNVGYNPSPGDEVPVQGVAITFEPKDFLHIKEKYNNDWWIGRLVKEGCEVGFIPSPVKLDSLRLLQEQKLRQNRLSSSKSGDNSSSSLGDVVTGTRRPTPPASAKQKQKSTEHVPPYDVVPSMRPIILVGPSLKGYEVTDMMQKALFDFLKHRFDGRISITRVTADISLAKRSVLNNPSKHIIIERSNTRSSLAEVQSEIERIFELARTLQLVALDADTINHPAQLSKTSLAPIIVYIKITSPKVLQRLIKSRGKSQSKHLNVQIAASEKLAQCPPEMFDIILDENQLEDACEHLAEYLEAYWKATHPPSSTPPNPLLNRTMATAALAASPAPVSNLQGPYLASGDQSLERATGEHASVHEYPGELGQPPGLYPSSHPPGRAGTLRALSRQDTFDADTPGNRNSAYTELGDSCVDMETDPSEGPGLGDPAGGSTPPARQGSWEDEEEDYEEELTDNRNRGRNKARYCAEGGGPVLGRNKNELEGWGRGVYIR</sequence>
<name>CACB1_BOVIN</name>
<protein>
    <recommendedName>
        <fullName>Voltage-dependent L-type calcium channel subunit beta-1</fullName>
        <shortName>CAB1</shortName>
    </recommendedName>
    <alternativeName>
        <fullName>Calcium channel voltage-dependent subunit beta 1</fullName>
    </alternativeName>
</protein>
<comment type="function">
    <text evidence="1 3 7">Regulatory subunit of L-type calcium channels (PubMed:10684870). Regulates the activity of L-type calcium channels that contain CACNA1A as pore-forming subunit (By similarity). Regulates the activity of L-type calcium channels that contain CACNA1C as pore-forming subunit and increases the presence of the channel complex at the cell membrane. Required for functional expression L-type calcium channels that contain CACNA1D as pore-forming subunit (By similarity). Regulates the activity of L-type calcium channels that contain CACNA1B as pore-forming subunit (PubMed:10684870).</text>
</comment>
<comment type="subunit">
    <text evidence="1 2 3 4 7">Regulatory subunit of L-type calcium channels that consist of a pore-forming alpha subunit and auxiliary beta, gamma and delta subunits (PubMed:10684870). Interacts with CACNA1A, CACNA1B, CACNA1C and CACNA1S. Component of a calcium channel complex consisting of a pore-forming alpha subunit (CACNA1S) and the ancillary subunits CACNB1 or CACNB2, CACNG1 and CACNA2D1. Identified in a complex with CACNA1C. Identified in a complex with the L-type calcium channel subunits CACNA1C, CACNA2D1, CACNB1 and one of the gamma subunits (CACNG4, CACNG6, CACNG7, or CACNG8) (By similarity). Part of a L-type calcium channel complex that contains CACNA1D, CACNA2D1 and CACNB1 (By similarity). Part of a L-type calcium channel complex that contains CACNA1B, CACNA2D1 and CACNB1 (PubMed:10684870). Interacts with JSRP1. Interacts with RYR1 (By similarity). Interacts with CBARP (By similarity).</text>
</comment>
<comment type="subcellular location">
    <subcellularLocation>
        <location evidence="1">Cell membrane</location>
        <location evidence="1">Sarcolemma</location>
        <topology evidence="1">Peripheral membrane protein</topology>
        <orientation evidence="1">Cytoplasmic side</orientation>
    </subcellularLocation>
    <subcellularLocation>
        <location evidence="3">Cell membrane</location>
        <topology evidence="1">Peripheral membrane protein</topology>
    </subcellularLocation>
</comment>
<comment type="alternative products">
    <event type="alternative splicing"/>
    <isoform>
        <id>Q9MZL7-1</id>
        <name>1</name>
        <name>Beta-1B</name>
        <name>CACNB1B</name>
        <sequence type="displayed"/>
    </isoform>
    <isoform>
        <id>Q9MZL7-2</id>
        <name>2</name>
        <name>Beta-1C</name>
        <name>CACNB1C</name>
        <sequence type="described" ref="VSP_000621 VSP_000622"/>
    </isoform>
</comment>
<comment type="similarity">
    <text evidence="9">Belongs to the calcium channel beta subunit family.</text>
</comment>
<evidence type="ECO:0000250" key="1">
    <source>
        <dbReference type="UniProtKB" id="P19517"/>
    </source>
</evidence>
<evidence type="ECO:0000250" key="2">
    <source>
        <dbReference type="UniProtKB" id="P54283"/>
    </source>
</evidence>
<evidence type="ECO:0000250" key="3">
    <source>
        <dbReference type="UniProtKB" id="Q02641"/>
    </source>
</evidence>
<evidence type="ECO:0000250" key="4">
    <source>
        <dbReference type="UniProtKB" id="Q8R3Z5"/>
    </source>
</evidence>
<evidence type="ECO:0000255" key="5">
    <source>
        <dbReference type="PROSITE-ProRule" id="PRU00192"/>
    </source>
</evidence>
<evidence type="ECO:0000256" key="6">
    <source>
        <dbReference type="SAM" id="MobiDB-lite"/>
    </source>
</evidence>
<evidence type="ECO:0000269" key="7">
    <source>
    </source>
</evidence>
<evidence type="ECO:0000303" key="8">
    <source>
    </source>
</evidence>
<evidence type="ECO:0000305" key="9"/>
<organism>
    <name type="scientific">Bos taurus</name>
    <name type="common">Bovine</name>
    <dbReference type="NCBI Taxonomy" id="9913"/>
    <lineage>
        <taxon>Eukaryota</taxon>
        <taxon>Metazoa</taxon>
        <taxon>Chordata</taxon>
        <taxon>Craniata</taxon>
        <taxon>Vertebrata</taxon>
        <taxon>Euteleostomi</taxon>
        <taxon>Mammalia</taxon>
        <taxon>Eutheria</taxon>
        <taxon>Laurasiatheria</taxon>
        <taxon>Artiodactyla</taxon>
        <taxon>Ruminantia</taxon>
        <taxon>Pecora</taxon>
        <taxon>Bovidae</taxon>
        <taxon>Bovinae</taxon>
        <taxon>Bos</taxon>
    </lineage>
</organism>
<feature type="chain" id="PRO_0000144045" description="Voltage-dependent L-type calcium channel subunit beta-1">
    <location>
        <begin position="1"/>
        <end position="598"/>
    </location>
</feature>
<feature type="domain" description="SH3" evidence="5">
    <location>
        <begin position="100"/>
        <end position="169"/>
    </location>
</feature>
<feature type="region of interest" description="Disordered" evidence="6">
    <location>
        <begin position="1"/>
        <end position="79"/>
    </location>
</feature>
<feature type="region of interest" description="Disordered" evidence="6">
    <location>
        <begin position="179"/>
        <end position="223"/>
    </location>
</feature>
<feature type="region of interest" description="Disordered" evidence="6">
    <location>
        <begin position="466"/>
        <end position="586"/>
    </location>
</feature>
<feature type="compositionally biased region" description="Polar residues" evidence="6">
    <location>
        <begin position="1"/>
        <end position="17"/>
    </location>
</feature>
<feature type="compositionally biased region" description="Low complexity" evidence="6">
    <location>
        <begin position="43"/>
        <end position="53"/>
    </location>
</feature>
<feature type="compositionally biased region" description="Polar residues" evidence="6">
    <location>
        <begin position="54"/>
        <end position="71"/>
    </location>
</feature>
<feature type="compositionally biased region" description="Low complexity" evidence="6">
    <location>
        <begin position="182"/>
        <end position="193"/>
    </location>
</feature>
<feature type="compositionally biased region" description="Acidic residues" evidence="6">
    <location>
        <begin position="548"/>
        <end position="559"/>
    </location>
</feature>
<feature type="modified residue" description="Phosphoserine" evidence="2">
    <location>
        <position position="44"/>
    </location>
</feature>
<feature type="modified residue" description="Phosphoserine" evidence="2">
    <location>
        <position position="47"/>
    </location>
</feature>
<feature type="modified residue" description="Phosphoserine" evidence="2">
    <location>
        <position position="73"/>
    </location>
</feature>
<feature type="modified residue" description="Phosphoserine" evidence="4">
    <location>
        <position position="186"/>
    </location>
</feature>
<feature type="modified residue" description="Phosphoserine" evidence="2">
    <location>
        <position position="193"/>
    </location>
</feature>
<feature type="modified residue" description="Phosphothreonine" evidence="4">
    <location>
        <position position="499"/>
    </location>
</feature>
<feature type="modified residue" description="Phosphoserine" evidence="4">
    <location>
        <position position="547"/>
    </location>
</feature>
<feature type="splice variant" id="VSP_000621" description="In isoform 2." evidence="8">
    <original>GPYLASGDQSLERATGEHASVHEYPGELGQPPGL</original>
    <variation>VQVLTSLRRNLSFWGGLEASQRARAVPQQQEHTV</variation>
    <location>
        <begin position="445"/>
        <end position="478"/>
    </location>
</feature>
<feature type="splice variant" id="VSP_000622" description="In isoform 2." evidence="8">
    <location>
        <begin position="479"/>
        <end position="598"/>
    </location>
</feature>
<proteinExistence type="evidence at protein level"/>
<keyword id="KW-0025">Alternative splicing</keyword>
<keyword id="KW-0106">Calcium</keyword>
<keyword id="KW-0107">Calcium channel</keyword>
<keyword id="KW-0109">Calcium transport</keyword>
<keyword id="KW-1003">Cell membrane</keyword>
<keyword id="KW-0407">Ion channel</keyword>
<keyword id="KW-0406">Ion transport</keyword>
<keyword id="KW-0472">Membrane</keyword>
<keyword id="KW-0597">Phosphoprotein</keyword>
<keyword id="KW-1185">Reference proteome</keyword>
<keyword id="KW-0728">SH3 domain</keyword>
<keyword id="KW-0813">Transport</keyword>
<keyword id="KW-0851">Voltage-gated channel</keyword>
<reference key="1">
    <citation type="journal article" date="2000" name="J. Neurosci.">
        <title>Coexpression of cloned alpha(1B), beta(2a), and alpha(2)/delta subunits produces non-inactivating calcium currents similar to those found in bovine chromaffin cells.</title>
        <authorList>
            <person name="Cahill A.L."/>
            <person name="Hurley J.H."/>
            <person name="Fox A.P."/>
        </authorList>
    </citation>
    <scope>NUCLEOTIDE SEQUENCE [MRNA] (ISOFORMS 1 AND 2)</scope>
    <scope>FUNCTION</scope>
    <scope>SUBUNIT</scope>
</reference>
<dbReference type="EMBL" id="AF174415">
    <property type="protein sequence ID" value="AAF26679.1"/>
    <property type="molecule type" value="mRNA"/>
</dbReference>
<dbReference type="EMBL" id="AF174416">
    <property type="protein sequence ID" value="AAF26680.1"/>
    <property type="molecule type" value="mRNA"/>
</dbReference>
<dbReference type="RefSeq" id="NP_787013.1">
    <molecule id="Q9MZL7-1"/>
    <property type="nucleotide sequence ID" value="NM_175819.2"/>
</dbReference>
<dbReference type="SMR" id="Q9MZL7"/>
<dbReference type="FunCoup" id="Q9MZL7">
    <property type="interactions" value="1764"/>
</dbReference>
<dbReference type="STRING" id="9913.ENSBTAP00000002640"/>
<dbReference type="PaxDb" id="9913-ENSBTAP00000040778"/>
<dbReference type="Ensembl" id="ENSBTAT00000084808.2">
    <molecule id="Q9MZL7-1"/>
    <property type="protein sequence ID" value="ENSBTAP00000067820.1"/>
    <property type="gene ID" value="ENSBTAG00000002036.7"/>
</dbReference>
<dbReference type="GeneID" id="327703"/>
<dbReference type="KEGG" id="bta:327703"/>
<dbReference type="CTD" id="782"/>
<dbReference type="VEuPathDB" id="HostDB:ENSBTAG00000002036"/>
<dbReference type="eggNOG" id="KOG3812">
    <property type="taxonomic scope" value="Eukaryota"/>
</dbReference>
<dbReference type="GeneTree" id="ENSGT00950000182837"/>
<dbReference type="HOGENOM" id="CLU_021995_3_1_1"/>
<dbReference type="InParanoid" id="Q9MZL7"/>
<dbReference type="OrthoDB" id="5962384at2759"/>
<dbReference type="Reactome" id="R-BTA-112308">
    <property type="pathway name" value="Presynaptic depolarization and calcium channel opening"/>
</dbReference>
<dbReference type="Reactome" id="R-BTA-5576892">
    <property type="pathway name" value="Phase 0 - rapid depolarisation"/>
</dbReference>
<dbReference type="Reactome" id="R-BTA-5576893">
    <property type="pathway name" value="Phase 2 - plateau phase"/>
</dbReference>
<dbReference type="Proteomes" id="UP000009136">
    <property type="component" value="Chromosome 19"/>
</dbReference>
<dbReference type="Bgee" id="ENSBTAG00000002036">
    <property type="expression patterns" value="Expressed in laryngeal cartilage and 102 other cell types or tissues"/>
</dbReference>
<dbReference type="GO" id="GO:0042383">
    <property type="term" value="C:sarcolemma"/>
    <property type="evidence" value="ECO:0007669"/>
    <property type="project" value="UniProtKB-SubCell"/>
</dbReference>
<dbReference type="GO" id="GO:0045202">
    <property type="term" value="C:synapse"/>
    <property type="evidence" value="ECO:0007669"/>
    <property type="project" value="GOC"/>
</dbReference>
<dbReference type="GO" id="GO:0005891">
    <property type="term" value="C:voltage-gated calcium channel complex"/>
    <property type="evidence" value="ECO:0007669"/>
    <property type="project" value="InterPro"/>
</dbReference>
<dbReference type="GO" id="GO:0005262">
    <property type="term" value="F:calcium channel activity"/>
    <property type="evidence" value="ECO:0000314"/>
    <property type="project" value="UniProtKB"/>
</dbReference>
<dbReference type="GO" id="GO:0008331">
    <property type="term" value="F:high voltage-gated calcium channel activity"/>
    <property type="evidence" value="ECO:0000318"/>
    <property type="project" value="GO_Central"/>
</dbReference>
<dbReference type="GO" id="GO:0006816">
    <property type="term" value="P:calcium ion transport"/>
    <property type="evidence" value="ECO:0000318"/>
    <property type="project" value="GO_Central"/>
</dbReference>
<dbReference type="GO" id="GO:0007268">
    <property type="term" value="P:chemical synaptic transmission"/>
    <property type="evidence" value="ECO:0000318"/>
    <property type="project" value="GO_Central"/>
</dbReference>
<dbReference type="FunFam" id="2.30.30.40:FF:000068">
    <property type="entry name" value="Voltage-dependent L-type calcium channel subunit beta-1 isoform 1"/>
    <property type="match status" value="1"/>
</dbReference>
<dbReference type="FunFam" id="3.40.50.300:FF:000432">
    <property type="entry name" value="Voltage-dependent L-type calcium channel subunit beta-1 isoform 1"/>
    <property type="match status" value="1"/>
</dbReference>
<dbReference type="Gene3D" id="3.40.50.300">
    <property type="entry name" value="P-loop containing nucleotide triphosphate hydrolases"/>
    <property type="match status" value="1"/>
</dbReference>
<dbReference type="Gene3D" id="2.30.30.40">
    <property type="entry name" value="SH3 Domains"/>
    <property type="match status" value="1"/>
</dbReference>
<dbReference type="InterPro" id="IPR046937">
    <property type="entry name" value="CAB1-4_N_A-dom"/>
</dbReference>
<dbReference type="InterPro" id="IPR008145">
    <property type="entry name" value="GK/Ca_channel_bsu"/>
</dbReference>
<dbReference type="InterPro" id="IPR027417">
    <property type="entry name" value="P-loop_NTPase"/>
</dbReference>
<dbReference type="InterPro" id="IPR036028">
    <property type="entry name" value="SH3-like_dom_sf"/>
</dbReference>
<dbReference type="InterPro" id="IPR001452">
    <property type="entry name" value="SH3_domain"/>
</dbReference>
<dbReference type="InterPro" id="IPR005443">
    <property type="entry name" value="VDCC_L_b1su"/>
</dbReference>
<dbReference type="InterPro" id="IPR000584">
    <property type="entry name" value="VDCC_L_bsu"/>
</dbReference>
<dbReference type="PANTHER" id="PTHR11824">
    <property type="entry name" value="VOLTAGE-DEPENDENT CALCIUM CHANNEL BETA SUBUNIT"/>
    <property type="match status" value="1"/>
</dbReference>
<dbReference type="Pfam" id="PF00625">
    <property type="entry name" value="Guanylate_kin"/>
    <property type="match status" value="1"/>
</dbReference>
<dbReference type="Pfam" id="PF12052">
    <property type="entry name" value="VGCC_beta4Aa_N"/>
    <property type="match status" value="1"/>
</dbReference>
<dbReference type="PRINTS" id="PR01626">
    <property type="entry name" value="LCACHANNELB"/>
</dbReference>
<dbReference type="PRINTS" id="PR01627">
    <property type="entry name" value="LCACHANNELB1"/>
</dbReference>
<dbReference type="SMART" id="SM00072">
    <property type="entry name" value="GuKc"/>
    <property type="match status" value="1"/>
</dbReference>
<dbReference type="SUPFAM" id="SSF52540">
    <property type="entry name" value="P-loop containing nucleoside triphosphate hydrolases"/>
    <property type="match status" value="1"/>
</dbReference>
<dbReference type="SUPFAM" id="SSF50044">
    <property type="entry name" value="SH3-domain"/>
    <property type="match status" value="1"/>
</dbReference>
<dbReference type="PROSITE" id="PS50002">
    <property type="entry name" value="SH3"/>
    <property type="match status" value="1"/>
</dbReference>
<gene>
    <name type="primary">CACNB1</name>
</gene>